<accession>B2G4Y5</accession>
<organism>
    <name type="scientific">Limosilactobacillus reuteri subsp. reuteri (strain JCM 1112)</name>
    <name type="common">Lactobacillus reuteri</name>
    <dbReference type="NCBI Taxonomy" id="557433"/>
    <lineage>
        <taxon>Bacteria</taxon>
        <taxon>Bacillati</taxon>
        <taxon>Bacillota</taxon>
        <taxon>Bacilli</taxon>
        <taxon>Lactobacillales</taxon>
        <taxon>Lactobacillaceae</taxon>
        <taxon>Limosilactobacillus</taxon>
    </lineage>
</organism>
<feature type="chain" id="PRO_1000121992" description="Chromosomal replication initiator protein DnaA">
    <location>
        <begin position="1"/>
        <end position="440"/>
    </location>
</feature>
<feature type="region of interest" description="Domain I, interacts with DnaA modulators" evidence="1">
    <location>
        <begin position="1"/>
        <end position="72"/>
    </location>
</feature>
<feature type="region of interest" description="Domain II" evidence="1">
    <location>
        <begin position="72"/>
        <end position="103"/>
    </location>
</feature>
<feature type="region of interest" description="Domain III, AAA+ region" evidence="1">
    <location>
        <begin position="104"/>
        <end position="320"/>
    </location>
</feature>
<feature type="region of interest" description="Domain IV, binds dsDNA" evidence="1">
    <location>
        <begin position="321"/>
        <end position="440"/>
    </location>
</feature>
<feature type="binding site" evidence="1">
    <location>
        <position position="148"/>
    </location>
    <ligand>
        <name>ATP</name>
        <dbReference type="ChEBI" id="CHEBI:30616"/>
    </ligand>
</feature>
<feature type="binding site" evidence="1">
    <location>
        <position position="150"/>
    </location>
    <ligand>
        <name>ATP</name>
        <dbReference type="ChEBI" id="CHEBI:30616"/>
    </ligand>
</feature>
<feature type="binding site" evidence="1">
    <location>
        <position position="151"/>
    </location>
    <ligand>
        <name>ATP</name>
        <dbReference type="ChEBI" id="CHEBI:30616"/>
    </ligand>
</feature>
<feature type="binding site" evidence="1">
    <location>
        <position position="152"/>
    </location>
    <ligand>
        <name>ATP</name>
        <dbReference type="ChEBI" id="CHEBI:30616"/>
    </ligand>
</feature>
<name>DNAA_LIMRJ</name>
<sequence>MTELDSLWEAIQNSFRQDTTPVTFDTLIAPAKAISLSQNQLEIEVPTPVHRDFWRKNLNTQLKEFAQRELGRNIEPHYVLEGEFTYTNKKTEDDPTPSFEMDTPLNPHYNFGTFVVGEGNKMAHAAAFAVAESPGSLYNPLFIYGGVGLGKTHLMEAIGNHMLQVNPNSRVKYVTSEDFTNDYINAIRNNTTEQLREEYRNLDLLLIDDIQFLANKEGTQLEFFNTFNALHDRKKQIVMTSDRIPNEIPELQDRLVSRFRWGLTVEITPPDLETRIAILRSKVEEDHIDIGNDTLNYIAGQIDTNIRELEGALTKVQAFANLSGERITPSLASQALKGLHRVAKNEISIATIQKQVADFYNITQGDILGKKRVKQIVMPRQIAMYLSRELTDSSLPKIGNEFGGKDHTTVLHAIDKIETELKKDTDLQNDITKLKAKLRS</sequence>
<keyword id="KW-0067">ATP-binding</keyword>
<keyword id="KW-0963">Cytoplasm</keyword>
<keyword id="KW-0235">DNA replication</keyword>
<keyword id="KW-0238">DNA-binding</keyword>
<keyword id="KW-0446">Lipid-binding</keyword>
<keyword id="KW-0547">Nucleotide-binding</keyword>
<evidence type="ECO:0000255" key="1">
    <source>
        <dbReference type="HAMAP-Rule" id="MF_00377"/>
    </source>
</evidence>
<protein>
    <recommendedName>
        <fullName evidence="1">Chromosomal replication initiator protein DnaA</fullName>
    </recommendedName>
</protein>
<reference key="1">
    <citation type="journal article" date="2008" name="DNA Res.">
        <title>Comparative genome analysis of Lactobacillus reuteri and Lactobacillus fermentum reveal a genomic island for reuterin and cobalamin production.</title>
        <authorList>
            <person name="Morita H."/>
            <person name="Toh H."/>
            <person name="Fukuda S."/>
            <person name="Horikawa H."/>
            <person name="Oshima K."/>
            <person name="Suzuki T."/>
            <person name="Murakami M."/>
            <person name="Hisamatsu S."/>
            <person name="Kato Y."/>
            <person name="Takizawa T."/>
            <person name="Fukuoka H."/>
            <person name="Yoshimura T."/>
            <person name="Itoh K."/>
            <person name="O'Sullivan D.J."/>
            <person name="McKay L.L."/>
            <person name="Ohno H."/>
            <person name="Kikuchi J."/>
            <person name="Masaoka T."/>
            <person name="Hattori M."/>
        </authorList>
    </citation>
    <scope>NUCLEOTIDE SEQUENCE [LARGE SCALE GENOMIC DNA]</scope>
    <source>
        <strain>JCM 1112</strain>
    </source>
</reference>
<gene>
    <name evidence="1" type="primary">dnaA</name>
    <name type="ordered locus">LAR_0001</name>
</gene>
<comment type="function">
    <text evidence="1">Plays an essential role in the initiation and regulation of chromosomal replication. ATP-DnaA binds to the origin of replication (oriC) to initiate formation of the DNA replication initiation complex once per cell cycle. Binds the DnaA box (a 9 base pair repeat at the origin) and separates the double-stranded (ds)DNA. Forms a right-handed helical filament on oriC DNA; dsDNA binds to the exterior of the filament while single-stranded (ss)DNA is stabiized in the filament's interior. The ATP-DnaA-oriC complex binds and stabilizes one strand of the AT-rich DNA unwinding element (DUE), permitting loading of DNA polymerase. After initiation quickly degrades to an ADP-DnaA complex that is not apt for DNA replication. Binds acidic phospholipids.</text>
</comment>
<comment type="subunit">
    <text evidence="1">Oligomerizes as a right-handed, spiral filament on DNA at oriC.</text>
</comment>
<comment type="subcellular location">
    <subcellularLocation>
        <location evidence="1">Cytoplasm</location>
    </subcellularLocation>
</comment>
<comment type="domain">
    <text evidence="1">Domain I is involved in oligomerization and binding regulators, domain II is flexibile and of varying length in different bacteria, domain III forms the AAA+ region, while domain IV binds dsDNA.</text>
</comment>
<comment type="similarity">
    <text evidence="1">Belongs to the DnaA family.</text>
</comment>
<proteinExistence type="inferred from homology"/>
<dbReference type="EMBL" id="AP007281">
    <property type="protein sequence ID" value="BAG24517.1"/>
    <property type="molecule type" value="Genomic_DNA"/>
</dbReference>
<dbReference type="RefSeq" id="WP_003669485.1">
    <property type="nucleotide sequence ID" value="NC_010609.1"/>
</dbReference>
<dbReference type="SMR" id="B2G4Y5"/>
<dbReference type="KEGG" id="lrf:LAR_0001"/>
<dbReference type="HOGENOM" id="CLU_026910_3_1_9"/>
<dbReference type="GO" id="GO:0005737">
    <property type="term" value="C:cytoplasm"/>
    <property type="evidence" value="ECO:0007669"/>
    <property type="project" value="UniProtKB-SubCell"/>
</dbReference>
<dbReference type="GO" id="GO:0005886">
    <property type="term" value="C:plasma membrane"/>
    <property type="evidence" value="ECO:0007669"/>
    <property type="project" value="TreeGrafter"/>
</dbReference>
<dbReference type="GO" id="GO:0005524">
    <property type="term" value="F:ATP binding"/>
    <property type="evidence" value="ECO:0007669"/>
    <property type="project" value="UniProtKB-UniRule"/>
</dbReference>
<dbReference type="GO" id="GO:0016887">
    <property type="term" value="F:ATP hydrolysis activity"/>
    <property type="evidence" value="ECO:0007669"/>
    <property type="project" value="InterPro"/>
</dbReference>
<dbReference type="GO" id="GO:0003688">
    <property type="term" value="F:DNA replication origin binding"/>
    <property type="evidence" value="ECO:0007669"/>
    <property type="project" value="UniProtKB-UniRule"/>
</dbReference>
<dbReference type="GO" id="GO:0008289">
    <property type="term" value="F:lipid binding"/>
    <property type="evidence" value="ECO:0007669"/>
    <property type="project" value="UniProtKB-KW"/>
</dbReference>
<dbReference type="GO" id="GO:0006270">
    <property type="term" value="P:DNA replication initiation"/>
    <property type="evidence" value="ECO:0007669"/>
    <property type="project" value="UniProtKB-UniRule"/>
</dbReference>
<dbReference type="GO" id="GO:0006275">
    <property type="term" value="P:regulation of DNA replication"/>
    <property type="evidence" value="ECO:0007669"/>
    <property type="project" value="UniProtKB-UniRule"/>
</dbReference>
<dbReference type="CDD" id="cd00009">
    <property type="entry name" value="AAA"/>
    <property type="match status" value="1"/>
</dbReference>
<dbReference type="CDD" id="cd06571">
    <property type="entry name" value="Bac_DnaA_C"/>
    <property type="match status" value="1"/>
</dbReference>
<dbReference type="FunFam" id="1.10.1750.10:FF:000002">
    <property type="entry name" value="Chromosomal replication initiator protein DnaA"/>
    <property type="match status" value="1"/>
</dbReference>
<dbReference type="FunFam" id="3.40.50.300:FF:000668">
    <property type="entry name" value="Chromosomal replication initiator protein DnaA"/>
    <property type="match status" value="1"/>
</dbReference>
<dbReference type="Gene3D" id="1.10.1750.10">
    <property type="match status" value="1"/>
</dbReference>
<dbReference type="Gene3D" id="1.10.8.60">
    <property type="match status" value="1"/>
</dbReference>
<dbReference type="Gene3D" id="3.30.300.180">
    <property type="match status" value="1"/>
</dbReference>
<dbReference type="Gene3D" id="3.40.50.300">
    <property type="entry name" value="P-loop containing nucleotide triphosphate hydrolases"/>
    <property type="match status" value="1"/>
</dbReference>
<dbReference type="HAMAP" id="MF_00377">
    <property type="entry name" value="DnaA_bact"/>
    <property type="match status" value="1"/>
</dbReference>
<dbReference type="InterPro" id="IPR003593">
    <property type="entry name" value="AAA+_ATPase"/>
</dbReference>
<dbReference type="InterPro" id="IPR001957">
    <property type="entry name" value="Chromosome_initiator_DnaA"/>
</dbReference>
<dbReference type="InterPro" id="IPR020591">
    <property type="entry name" value="Chromosome_initiator_DnaA-like"/>
</dbReference>
<dbReference type="InterPro" id="IPR018312">
    <property type="entry name" value="Chromosome_initiator_DnaA_CS"/>
</dbReference>
<dbReference type="InterPro" id="IPR013159">
    <property type="entry name" value="DnaA_C"/>
</dbReference>
<dbReference type="InterPro" id="IPR013317">
    <property type="entry name" value="DnaA_dom"/>
</dbReference>
<dbReference type="InterPro" id="IPR024633">
    <property type="entry name" value="DnaA_N_dom"/>
</dbReference>
<dbReference type="InterPro" id="IPR038454">
    <property type="entry name" value="DnaA_N_sf"/>
</dbReference>
<dbReference type="InterPro" id="IPR027417">
    <property type="entry name" value="P-loop_NTPase"/>
</dbReference>
<dbReference type="InterPro" id="IPR010921">
    <property type="entry name" value="Trp_repressor/repl_initiator"/>
</dbReference>
<dbReference type="NCBIfam" id="TIGR00362">
    <property type="entry name" value="DnaA"/>
    <property type="match status" value="1"/>
</dbReference>
<dbReference type="PANTHER" id="PTHR30050">
    <property type="entry name" value="CHROMOSOMAL REPLICATION INITIATOR PROTEIN DNAA"/>
    <property type="match status" value="1"/>
</dbReference>
<dbReference type="PANTHER" id="PTHR30050:SF2">
    <property type="entry name" value="CHROMOSOMAL REPLICATION INITIATOR PROTEIN DNAA"/>
    <property type="match status" value="1"/>
</dbReference>
<dbReference type="Pfam" id="PF00308">
    <property type="entry name" value="Bac_DnaA"/>
    <property type="match status" value="1"/>
</dbReference>
<dbReference type="Pfam" id="PF08299">
    <property type="entry name" value="Bac_DnaA_C"/>
    <property type="match status" value="1"/>
</dbReference>
<dbReference type="Pfam" id="PF11638">
    <property type="entry name" value="DnaA_N"/>
    <property type="match status" value="1"/>
</dbReference>
<dbReference type="PRINTS" id="PR00051">
    <property type="entry name" value="DNAA"/>
</dbReference>
<dbReference type="SMART" id="SM00382">
    <property type="entry name" value="AAA"/>
    <property type="match status" value="1"/>
</dbReference>
<dbReference type="SMART" id="SM00760">
    <property type="entry name" value="Bac_DnaA_C"/>
    <property type="match status" value="1"/>
</dbReference>
<dbReference type="SUPFAM" id="SSF52540">
    <property type="entry name" value="P-loop containing nucleoside triphosphate hydrolases"/>
    <property type="match status" value="1"/>
</dbReference>
<dbReference type="SUPFAM" id="SSF48295">
    <property type="entry name" value="TrpR-like"/>
    <property type="match status" value="1"/>
</dbReference>
<dbReference type="PROSITE" id="PS01008">
    <property type="entry name" value="DNAA"/>
    <property type="match status" value="1"/>
</dbReference>